<evidence type="ECO:0000255" key="1">
    <source>
        <dbReference type="HAMAP-Rule" id="MF_00046"/>
    </source>
</evidence>
<comment type="function">
    <text evidence="1">Cell wall formation.</text>
</comment>
<comment type="catalytic activity">
    <reaction evidence="1">
        <text>UDP-N-acetyl-alpha-D-muramate + L-alanine + ATP = UDP-N-acetyl-alpha-D-muramoyl-L-alanine + ADP + phosphate + H(+)</text>
        <dbReference type="Rhea" id="RHEA:23372"/>
        <dbReference type="ChEBI" id="CHEBI:15378"/>
        <dbReference type="ChEBI" id="CHEBI:30616"/>
        <dbReference type="ChEBI" id="CHEBI:43474"/>
        <dbReference type="ChEBI" id="CHEBI:57972"/>
        <dbReference type="ChEBI" id="CHEBI:70757"/>
        <dbReference type="ChEBI" id="CHEBI:83898"/>
        <dbReference type="ChEBI" id="CHEBI:456216"/>
        <dbReference type="EC" id="6.3.2.8"/>
    </reaction>
</comment>
<comment type="pathway">
    <text evidence="1">Cell wall biogenesis; peptidoglycan biosynthesis.</text>
</comment>
<comment type="subcellular location">
    <subcellularLocation>
        <location evidence="1">Cytoplasm</location>
    </subcellularLocation>
</comment>
<comment type="similarity">
    <text evidence="1">Belongs to the MurCDEF family.</text>
</comment>
<dbReference type="EC" id="6.3.2.8" evidence="1"/>
<dbReference type="EMBL" id="CP000557">
    <property type="protein sequence ID" value="ABO68065.1"/>
    <property type="molecule type" value="Genomic_DNA"/>
</dbReference>
<dbReference type="RefSeq" id="WP_011887992.1">
    <property type="nucleotide sequence ID" value="NC_009328.1"/>
</dbReference>
<dbReference type="SMR" id="A4IRW1"/>
<dbReference type="KEGG" id="gtn:GTNG_2720"/>
<dbReference type="eggNOG" id="COG0773">
    <property type="taxonomic scope" value="Bacteria"/>
</dbReference>
<dbReference type="HOGENOM" id="CLU_028104_1_0_9"/>
<dbReference type="UniPathway" id="UPA00219"/>
<dbReference type="Proteomes" id="UP000001578">
    <property type="component" value="Chromosome"/>
</dbReference>
<dbReference type="GO" id="GO:0005737">
    <property type="term" value="C:cytoplasm"/>
    <property type="evidence" value="ECO:0007669"/>
    <property type="project" value="UniProtKB-SubCell"/>
</dbReference>
<dbReference type="GO" id="GO:0005524">
    <property type="term" value="F:ATP binding"/>
    <property type="evidence" value="ECO:0007669"/>
    <property type="project" value="UniProtKB-UniRule"/>
</dbReference>
<dbReference type="GO" id="GO:0008763">
    <property type="term" value="F:UDP-N-acetylmuramate-L-alanine ligase activity"/>
    <property type="evidence" value="ECO:0007669"/>
    <property type="project" value="UniProtKB-UniRule"/>
</dbReference>
<dbReference type="GO" id="GO:0051301">
    <property type="term" value="P:cell division"/>
    <property type="evidence" value="ECO:0007669"/>
    <property type="project" value="UniProtKB-KW"/>
</dbReference>
<dbReference type="GO" id="GO:0071555">
    <property type="term" value="P:cell wall organization"/>
    <property type="evidence" value="ECO:0007669"/>
    <property type="project" value="UniProtKB-KW"/>
</dbReference>
<dbReference type="GO" id="GO:0009252">
    <property type="term" value="P:peptidoglycan biosynthetic process"/>
    <property type="evidence" value="ECO:0007669"/>
    <property type="project" value="UniProtKB-UniRule"/>
</dbReference>
<dbReference type="GO" id="GO:0008360">
    <property type="term" value="P:regulation of cell shape"/>
    <property type="evidence" value="ECO:0007669"/>
    <property type="project" value="UniProtKB-KW"/>
</dbReference>
<dbReference type="Gene3D" id="3.90.190.20">
    <property type="entry name" value="Mur ligase, C-terminal domain"/>
    <property type="match status" value="1"/>
</dbReference>
<dbReference type="Gene3D" id="3.40.1190.10">
    <property type="entry name" value="Mur-like, catalytic domain"/>
    <property type="match status" value="1"/>
</dbReference>
<dbReference type="Gene3D" id="3.40.50.720">
    <property type="entry name" value="NAD(P)-binding Rossmann-like Domain"/>
    <property type="match status" value="1"/>
</dbReference>
<dbReference type="HAMAP" id="MF_00046">
    <property type="entry name" value="MurC"/>
    <property type="match status" value="1"/>
</dbReference>
<dbReference type="InterPro" id="IPR036565">
    <property type="entry name" value="Mur-like_cat_sf"/>
</dbReference>
<dbReference type="InterPro" id="IPR004101">
    <property type="entry name" value="Mur_ligase_C"/>
</dbReference>
<dbReference type="InterPro" id="IPR036615">
    <property type="entry name" value="Mur_ligase_C_dom_sf"/>
</dbReference>
<dbReference type="InterPro" id="IPR013221">
    <property type="entry name" value="Mur_ligase_cen"/>
</dbReference>
<dbReference type="InterPro" id="IPR000713">
    <property type="entry name" value="Mur_ligase_N"/>
</dbReference>
<dbReference type="InterPro" id="IPR050061">
    <property type="entry name" value="MurCDEF_pg_biosynth"/>
</dbReference>
<dbReference type="InterPro" id="IPR005758">
    <property type="entry name" value="UDP-N-AcMur_Ala_ligase_MurC"/>
</dbReference>
<dbReference type="NCBIfam" id="TIGR01082">
    <property type="entry name" value="murC"/>
    <property type="match status" value="1"/>
</dbReference>
<dbReference type="PANTHER" id="PTHR43445:SF3">
    <property type="entry name" value="UDP-N-ACETYLMURAMATE--L-ALANINE LIGASE"/>
    <property type="match status" value="1"/>
</dbReference>
<dbReference type="PANTHER" id="PTHR43445">
    <property type="entry name" value="UDP-N-ACETYLMURAMATE--L-ALANINE LIGASE-RELATED"/>
    <property type="match status" value="1"/>
</dbReference>
<dbReference type="Pfam" id="PF01225">
    <property type="entry name" value="Mur_ligase"/>
    <property type="match status" value="1"/>
</dbReference>
<dbReference type="Pfam" id="PF02875">
    <property type="entry name" value="Mur_ligase_C"/>
    <property type="match status" value="1"/>
</dbReference>
<dbReference type="Pfam" id="PF08245">
    <property type="entry name" value="Mur_ligase_M"/>
    <property type="match status" value="1"/>
</dbReference>
<dbReference type="SUPFAM" id="SSF51984">
    <property type="entry name" value="MurCD N-terminal domain"/>
    <property type="match status" value="1"/>
</dbReference>
<dbReference type="SUPFAM" id="SSF53623">
    <property type="entry name" value="MurD-like peptide ligases, catalytic domain"/>
    <property type="match status" value="1"/>
</dbReference>
<dbReference type="SUPFAM" id="SSF53244">
    <property type="entry name" value="MurD-like peptide ligases, peptide-binding domain"/>
    <property type="match status" value="1"/>
</dbReference>
<proteinExistence type="inferred from homology"/>
<reference key="1">
    <citation type="journal article" date="2007" name="Proc. Natl. Acad. Sci. U.S.A.">
        <title>Genome and proteome of long-chain alkane degrading Geobacillus thermodenitrificans NG80-2 isolated from a deep-subsurface oil reservoir.</title>
        <authorList>
            <person name="Feng L."/>
            <person name="Wang W."/>
            <person name="Cheng J."/>
            <person name="Ren Y."/>
            <person name="Zhao G."/>
            <person name="Gao C."/>
            <person name="Tang Y."/>
            <person name="Liu X."/>
            <person name="Han W."/>
            <person name="Peng X."/>
            <person name="Liu R."/>
            <person name="Wang L."/>
        </authorList>
    </citation>
    <scope>NUCLEOTIDE SEQUENCE [LARGE SCALE GENOMIC DNA]</scope>
    <source>
        <strain>NG80-2</strain>
    </source>
</reference>
<keyword id="KW-0067">ATP-binding</keyword>
<keyword id="KW-0131">Cell cycle</keyword>
<keyword id="KW-0132">Cell division</keyword>
<keyword id="KW-0133">Cell shape</keyword>
<keyword id="KW-0961">Cell wall biogenesis/degradation</keyword>
<keyword id="KW-0963">Cytoplasm</keyword>
<keyword id="KW-0436">Ligase</keyword>
<keyword id="KW-0547">Nucleotide-binding</keyword>
<keyword id="KW-0573">Peptidoglycan synthesis</keyword>
<gene>
    <name evidence="1" type="primary">murC</name>
    <name type="ordered locus">GTNG_2720</name>
</gene>
<feature type="chain" id="PRO_1000004347" description="UDP-N-acetylmuramate--L-alanine ligase">
    <location>
        <begin position="1"/>
        <end position="434"/>
    </location>
</feature>
<feature type="binding site" evidence="1">
    <location>
        <begin position="108"/>
        <end position="114"/>
    </location>
    <ligand>
        <name>ATP</name>
        <dbReference type="ChEBI" id="CHEBI:30616"/>
    </ligand>
</feature>
<name>MURC_GEOTN</name>
<organism>
    <name type="scientific">Geobacillus thermodenitrificans (strain NG80-2)</name>
    <dbReference type="NCBI Taxonomy" id="420246"/>
    <lineage>
        <taxon>Bacteria</taxon>
        <taxon>Bacillati</taxon>
        <taxon>Bacillota</taxon>
        <taxon>Bacilli</taxon>
        <taxon>Bacillales</taxon>
        <taxon>Anoxybacillaceae</taxon>
        <taxon>Geobacillus</taxon>
    </lineage>
</organism>
<protein>
    <recommendedName>
        <fullName evidence="1">UDP-N-acetylmuramate--L-alanine ligase</fullName>
        <ecNumber evidence="1">6.3.2.8</ecNumber>
    </recommendedName>
    <alternativeName>
        <fullName evidence="1">UDP-N-acetylmuramoyl-L-alanine synthetase</fullName>
    </alternativeName>
</protein>
<sequence length="434" mass="48692">MTVYHFVGIKGTGMSALAQVLYDLGYTVQGSDVEKWFFTQKALEERGIPVLPFSKDNVHPGYTVIAGNAFPDTHEEIEAARQLSVPVIRYHRFLGELASKFTSIAVTGSHGKTTTTGLLAHVMQGAHPTSYLIGDGTGKGEPGSKYFVFEACEYRRHFLSYFPDYAIITNIDFDHPDYFANIDDVFSAFQQMAQQVKKGIVACGDDPYLQNIQAKVPILFYGLGEENDFQARNIVKTTEGTAFDVFVRNTFFASFTIPRFGTHNVLNALAVIALCHYEGIDAGTIAARLQTFQGVKRRFTEKTVGRQVLIDDYAHHPREIMATLEAARQKYPGREVVAIFQPHTYTRTQTFLSEFAESLQQADYVYLCDIFGSAREHHGKLSIRDLQEKIPRSQLLEEQNVSVLKQHRDAVLVFMGAGDIQKFQHAYEQAVLSA</sequence>
<accession>A4IRW1</accession>